<evidence type="ECO:0000255" key="1">
    <source>
        <dbReference type="HAMAP-Rule" id="MF_01595"/>
    </source>
</evidence>
<sequence>MTFNEKCVEAQVGNMNVKISTGKMAKQASGAVVISSGDTMVLVTVVGTKEAKPGQDFFPLTVNYTEKTYAGGKIPGSFFKREGRPSEDETLICRLIDRPIRPLFPESYLCDTQVMATVISAEEDHDPAILSMIGASAALMISDIPFEGPIAGVKVGRVDGKLIANPSAEQLKLSDLEIVVAAGKDAIFMVEGEADFVSEEDLLEAVFFAKDAVQGILAAQEELARQVGVAKREVAPLVVDEALKAKVKALAFDRIAQAFKIKAKQERYAAVAQIKEEVVAALAEEFEGRDKEIKGFIGDIEYDRMRHDVLETGIRIDGRDTKTVRPIAIEAGLLPRAHGSTLFTRGETQVLAAATLGTSQDEQRMDSLYGEYRKKFMLHYNFPPFSVGETSFRLAPGRREIGHGMLAERAISAILPNHDDFPYTIRIVAETLESNGSSSMATVCGGCLSLMDAGVPVKAPVAGIAMGLIKEGEKVAILTDILGDEDHLGDMDFKVAGSADGVTALQMDIKIGGVSKEIMQQALKQAKEGRLHILGKMAQCLAAPREEMSAFAPRITTIWIKPDRIRDVIGTGGKTIRSITEATGVMIDIDSDNSGKINIASSDKAACDAAIQMIRGLTDEVEEGKLYMGTVKKIMEFGAFVEVLPGTDGLVHISELDETRVKNVTDILNEGDKVLVKCIGVDKQGKIKLSRKAALGQSLEEKD</sequence>
<proteinExistence type="inferred from homology"/>
<accession>B3EAF2</accession>
<name>PNP_TRIL1</name>
<feature type="chain" id="PRO_0000381899" description="Polyribonucleotide nucleotidyltransferase">
    <location>
        <begin position="1"/>
        <end position="703"/>
    </location>
</feature>
<feature type="domain" description="KH" evidence="1">
    <location>
        <begin position="553"/>
        <end position="614"/>
    </location>
</feature>
<feature type="domain" description="S1 motif" evidence="1">
    <location>
        <begin position="624"/>
        <end position="692"/>
    </location>
</feature>
<feature type="binding site" evidence="1">
    <location>
        <position position="486"/>
    </location>
    <ligand>
        <name>Mg(2+)</name>
        <dbReference type="ChEBI" id="CHEBI:18420"/>
    </ligand>
</feature>
<feature type="binding site" evidence="1">
    <location>
        <position position="492"/>
    </location>
    <ligand>
        <name>Mg(2+)</name>
        <dbReference type="ChEBI" id="CHEBI:18420"/>
    </ligand>
</feature>
<organism>
    <name type="scientific">Trichlorobacter lovleyi (strain ATCC BAA-1151 / DSM 17278 / SZ)</name>
    <name type="common">Geobacter lovleyi</name>
    <dbReference type="NCBI Taxonomy" id="398767"/>
    <lineage>
        <taxon>Bacteria</taxon>
        <taxon>Pseudomonadati</taxon>
        <taxon>Thermodesulfobacteriota</taxon>
        <taxon>Desulfuromonadia</taxon>
        <taxon>Geobacterales</taxon>
        <taxon>Geobacteraceae</taxon>
        <taxon>Trichlorobacter</taxon>
    </lineage>
</organism>
<reference key="1">
    <citation type="submission" date="2008-05" db="EMBL/GenBank/DDBJ databases">
        <title>Complete sequence of chromosome of Geobacter lovleyi SZ.</title>
        <authorList>
            <consortium name="US DOE Joint Genome Institute"/>
            <person name="Lucas S."/>
            <person name="Copeland A."/>
            <person name="Lapidus A."/>
            <person name="Glavina del Rio T."/>
            <person name="Dalin E."/>
            <person name="Tice H."/>
            <person name="Bruce D."/>
            <person name="Goodwin L."/>
            <person name="Pitluck S."/>
            <person name="Chertkov O."/>
            <person name="Meincke L."/>
            <person name="Brettin T."/>
            <person name="Detter J.C."/>
            <person name="Han C."/>
            <person name="Tapia R."/>
            <person name="Kuske C.R."/>
            <person name="Schmutz J."/>
            <person name="Larimer F."/>
            <person name="Land M."/>
            <person name="Hauser L."/>
            <person name="Kyrpides N."/>
            <person name="Mikhailova N."/>
            <person name="Sung Y."/>
            <person name="Fletcher K.E."/>
            <person name="Ritalahti K.M."/>
            <person name="Loeffler F.E."/>
            <person name="Richardson P."/>
        </authorList>
    </citation>
    <scope>NUCLEOTIDE SEQUENCE [LARGE SCALE GENOMIC DNA]</scope>
    <source>
        <strain>ATCC BAA-1151 / DSM 17278 / SZ</strain>
    </source>
</reference>
<keyword id="KW-0963">Cytoplasm</keyword>
<keyword id="KW-0460">Magnesium</keyword>
<keyword id="KW-0479">Metal-binding</keyword>
<keyword id="KW-0548">Nucleotidyltransferase</keyword>
<keyword id="KW-1185">Reference proteome</keyword>
<keyword id="KW-0694">RNA-binding</keyword>
<keyword id="KW-0808">Transferase</keyword>
<dbReference type="EC" id="2.7.7.8" evidence="1"/>
<dbReference type="EMBL" id="CP001089">
    <property type="protein sequence ID" value="ACD95390.1"/>
    <property type="molecule type" value="Genomic_DNA"/>
</dbReference>
<dbReference type="RefSeq" id="WP_012469732.1">
    <property type="nucleotide sequence ID" value="NC_010814.1"/>
</dbReference>
<dbReference type="SMR" id="B3EAF2"/>
<dbReference type="STRING" id="398767.Glov_1674"/>
<dbReference type="KEGG" id="glo:Glov_1674"/>
<dbReference type="eggNOG" id="COG1185">
    <property type="taxonomic scope" value="Bacteria"/>
</dbReference>
<dbReference type="HOGENOM" id="CLU_004217_2_2_7"/>
<dbReference type="OrthoDB" id="9804305at2"/>
<dbReference type="Proteomes" id="UP000002420">
    <property type="component" value="Chromosome"/>
</dbReference>
<dbReference type="GO" id="GO:0005829">
    <property type="term" value="C:cytosol"/>
    <property type="evidence" value="ECO:0007669"/>
    <property type="project" value="TreeGrafter"/>
</dbReference>
<dbReference type="GO" id="GO:0000175">
    <property type="term" value="F:3'-5'-RNA exonuclease activity"/>
    <property type="evidence" value="ECO:0007669"/>
    <property type="project" value="TreeGrafter"/>
</dbReference>
<dbReference type="GO" id="GO:0000287">
    <property type="term" value="F:magnesium ion binding"/>
    <property type="evidence" value="ECO:0007669"/>
    <property type="project" value="UniProtKB-UniRule"/>
</dbReference>
<dbReference type="GO" id="GO:0004654">
    <property type="term" value="F:polyribonucleotide nucleotidyltransferase activity"/>
    <property type="evidence" value="ECO:0007669"/>
    <property type="project" value="UniProtKB-UniRule"/>
</dbReference>
<dbReference type="GO" id="GO:0003723">
    <property type="term" value="F:RNA binding"/>
    <property type="evidence" value="ECO:0007669"/>
    <property type="project" value="UniProtKB-UniRule"/>
</dbReference>
<dbReference type="GO" id="GO:0006402">
    <property type="term" value="P:mRNA catabolic process"/>
    <property type="evidence" value="ECO:0007669"/>
    <property type="project" value="UniProtKB-UniRule"/>
</dbReference>
<dbReference type="GO" id="GO:0006396">
    <property type="term" value="P:RNA processing"/>
    <property type="evidence" value="ECO:0007669"/>
    <property type="project" value="InterPro"/>
</dbReference>
<dbReference type="CDD" id="cd02393">
    <property type="entry name" value="KH-I_PNPase"/>
    <property type="match status" value="1"/>
</dbReference>
<dbReference type="CDD" id="cd11363">
    <property type="entry name" value="RNase_PH_PNPase_1"/>
    <property type="match status" value="1"/>
</dbReference>
<dbReference type="CDD" id="cd11364">
    <property type="entry name" value="RNase_PH_PNPase_2"/>
    <property type="match status" value="1"/>
</dbReference>
<dbReference type="CDD" id="cd04472">
    <property type="entry name" value="S1_PNPase"/>
    <property type="match status" value="1"/>
</dbReference>
<dbReference type="FunFam" id="2.40.50.140:FF:000023">
    <property type="entry name" value="Polyribonucleotide nucleotidyltransferase"/>
    <property type="match status" value="1"/>
</dbReference>
<dbReference type="FunFam" id="3.30.1370.10:FF:000001">
    <property type="entry name" value="Polyribonucleotide nucleotidyltransferase"/>
    <property type="match status" value="1"/>
</dbReference>
<dbReference type="FunFam" id="3.30.230.70:FF:000001">
    <property type="entry name" value="Polyribonucleotide nucleotidyltransferase"/>
    <property type="match status" value="1"/>
</dbReference>
<dbReference type="FunFam" id="3.30.230.70:FF:000002">
    <property type="entry name" value="Polyribonucleotide nucleotidyltransferase"/>
    <property type="match status" value="1"/>
</dbReference>
<dbReference type="Gene3D" id="3.30.230.70">
    <property type="entry name" value="GHMP Kinase, N-terminal domain"/>
    <property type="match status" value="2"/>
</dbReference>
<dbReference type="Gene3D" id="3.30.1370.10">
    <property type="entry name" value="K Homology domain, type 1"/>
    <property type="match status" value="1"/>
</dbReference>
<dbReference type="Gene3D" id="2.40.50.140">
    <property type="entry name" value="Nucleic acid-binding proteins"/>
    <property type="match status" value="1"/>
</dbReference>
<dbReference type="HAMAP" id="MF_01595">
    <property type="entry name" value="PNPase"/>
    <property type="match status" value="1"/>
</dbReference>
<dbReference type="InterPro" id="IPR001247">
    <property type="entry name" value="ExoRNase_PH_dom1"/>
</dbReference>
<dbReference type="InterPro" id="IPR015847">
    <property type="entry name" value="ExoRNase_PH_dom2"/>
</dbReference>
<dbReference type="InterPro" id="IPR036345">
    <property type="entry name" value="ExoRNase_PH_dom2_sf"/>
</dbReference>
<dbReference type="InterPro" id="IPR004087">
    <property type="entry name" value="KH_dom"/>
</dbReference>
<dbReference type="InterPro" id="IPR004088">
    <property type="entry name" value="KH_dom_type_1"/>
</dbReference>
<dbReference type="InterPro" id="IPR036612">
    <property type="entry name" value="KH_dom_type_1_sf"/>
</dbReference>
<dbReference type="InterPro" id="IPR012340">
    <property type="entry name" value="NA-bd_OB-fold"/>
</dbReference>
<dbReference type="InterPro" id="IPR012162">
    <property type="entry name" value="PNPase"/>
</dbReference>
<dbReference type="InterPro" id="IPR027408">
    <property type="entry name" value="PNPase/RNase_PH_dom_sf"/>
</dbReference>
<dbReference type="InterPro" id="IPR015848">
    <property type="entry name" value="PNPase_PH_RNA-bd_bac/org-type"/>
</dbReference>
<dbReference type="InterPro" id="IPR036456">
    <property type="entry name" value="PNPase_PH_RNA-bd_sf"/>
</dbReference>
<dbReference type="InterPro" id="IPR020568">
    <property type="entry name" value="Ribosomal_Su5_D2-typ_SF"/>
</dbReference>
<dbReference type="InterPro" id="IPR003029">
    <property type="entry name" value="S1_domain"/>
</dbReference>
<dbReference type="NCBIfam" id="TIGR03591">
    <property type="entry name" value="polynuc_phos"/>
    <property type="match status" value="1"/>
</dbReference>
<dbReference type="NCBIfam" id="NF008805">
    <property type="entry name" value="PRK11824.1"/>
    <property type="match status" value="1"/>
</dbReference>
<dbReference type="PANTHER" id="PTHR11252">
    <property type="entry name" value="POLYRIBONUCLEOTIDE NUCLEOTIDYLTRANSFERASE"/>
    <property type="match status" value="1"/>
</dbReference>
<dbReference type="PANTHER" id="PTHR11252:SF0">
    <property type="entry name" value="POLYRIBONUCLEOTIDE NUCLEOTIDYLTRANSFERASE 1, MITOCHONDRIAL"/>
    <property type="match status" value="1"/>
</dbReference>
<dbReference type="Pfam" id="PF00013">
    <property type="entry name" value="KH_1"/>
    <property type="match status" value="1"/>
</dbReference>
<dbReference type="Pfam" id="PF03726">
    <property type="entry name" value="PNPase"/>
    <property type="match status" value="1"/>
</dbReference>
<dbReference type="Pfam" id="PF01138">
    <property type="entry name" value="RNase_PH"/>
    <property type="match status" value="2"/>
</dbReference>
<dbReference type="Pfam" id="PF03725">
    <property type="entry name" value="RNase_PH_C"/>
    <property type="match status" value="2"/>
</dbReference>
<dbReference type="Pfam" id="PF00575">
    <property type="entry name" value="S1"/>
    <property type="match status" value="1"/>
</dbReference>
<dbReference type="PIRSF" id="PIRSF005499">
    <property type="entry name" value="PNPase"/>
    <property type="match status" value="1"/>
</dbReference>
<dbReference type="SMART" id="SM00322">
    <property type="entry name" value="KH"/>
    <property type="match status" value="1"/>
</dbReference>
<dbReference type="SMART" id="SM00316">
    <property type="entry name" value="S1"/>
    <property type="match status" value="1"/>
</dbReference>
<dbReference type="SUPFAM" id="SSF54791">
    <property type="entry name" value="Eukaryotic type KH-domain (KH-domain type I)"/>
    <property type="match status" value="1"/>
</dbReference>
<dbReference type="SUPFAM" id="SSF50249">
    <property type="entry name" value="Nucleic acid-binding proteins"/>
    <property type="match status" value="1"/>
</dbReference>
<dbReference type="SUPFAM" id="SSF46915">
    <property type="entry name" value="Polynucleotide phosphorylase/guanosine pentaphosphate synthase (PNPase/GPSI), domain 3"/>
    <property type="match status" value="1"/>
</dbReference>
<dbReference type="SUPFAM" id="SSF55666">
    <property type="entry name" value="Ribonuclease PH domain 2-like"/>
    <property type="match status" value="2"/>
</dbReference>
<dbReference type="SUPFAM" id="SSF54211">
    <property type="entry name" value="Ribosomal protein S5 domain 2-like"/>
    <property type="match status" value="2"/>
</dbReference>
<dbReference type="PROSITE" id="PS50084">
    <property type="entry name" value="KH_TYPE_1"/>
    <property type="match status" value="1"/>
</dbReference>
<dbReference type="PROSITE" id="PS50126">
    <property type="entry name" value="S1"/>
    <property type="match status" value="1"/>
</dbReference>
<protein>
    <recommendedName>
        <fullName evidence="1">Polyribonucleotide nucleotidyltransferase</fullName>
        <ecNumber evidence="1">2.7.7.8</ecNumber>
    </recommendedName>
    <alternativeName>
        <fullName evidence="1">Polynucleotide phosphorylase</fullName>
        <shortName evidence="1">PNPase</shortName>
    </alternativeName>
</protein>
<gene>
    <name evidence="1" type="primary">pnp</name>
    <name type="ordered locus">Glov_1674</name>
</gene>
<comment type="function">
    <text evidence="1">Involved in mRNA degradation. Catalyzes the phosphorolysis of single-stranded polyribonucleotides processively in the 3'- to 5'-direction.</text>
</comment>
<comment type="catalytic activity">
    <reaction evidence="1">
        <text>RNA(n+1) + phosphate = RNA(n) + a ribonucleoside 5'-diphosphate</text>
        <dbReference type="Rhea" id="RHEA:22096"/>
        <dbReference type="Rhea" id="RHEA-COMP:14527"/>
        <dbReference type="Rhea" id="RHEA-COMP:17342"/>
        <dbReference type="ChEBI" id="CHEBI:43474"/>
        <dbReference type="ChEBI" id="CHEBI:57930"/>
        <dbReference type="ChEBI" id="CHEBI:140395"/>
        <dbReference type="EC" id="2.7.7.8"/>
    </reaction>
</comment>
<comment type="cofactor">
    <cofactor evidence="1">
        <name>Mg(2+)</name>
        <dbReference type="ChEBI" id="CHEBI:18420"/>
    </cofactor>
</comment>
<comment type="subcellular location">
    <subcellularLocation>
        <location evidence="1">Cytoplasm</location>
    </subcellularLocation>
</comment>
<comment type="similarity">
    <text evidence="1">Belongs to the polyribonucleotide nucleotidyltransferase family.</text>
</comment>